<keyword id="KW-0342">GTP-binding</keyword>
<keyword id="KW-0547">Nucleotide-binding</keyword>
<keyword id="KW-1185">Reference proteome</keyword>
<keyword id="KW-0677">Repeat</keyword>
<keyword id="KW-0690">Ribosome biogenesis</keyword>
<proteinExistence type="inferred from homology"/>
<protein>
    <recommendedName>
        <fullName evidence="1">GTPase Der</fullName>
    </recommendedName>
    <alternativeName>
        <fullName evidence="1">GTP-binding protein EngA</fullName>
    </alternativeName>
</protein>
<dbReference type="EMBL" id="CP000932">
    <property type="protein sequence ID" value="ACM63870.1"/>
    <property type="molecule type" value="Genomic_DNA"/>
</dbReference>
<dbReference type="RefSeq" id="WP_012661253.1">
    <property type="nucleotide sequence ID" value="NC_012039.1"/>
</dbReference>
<dbReference type="SMR" id="B9KFN5"/>
<dbReference type="STRING" id="306263.Cla_0536"/>
<dbReference type="KEGG" id="cla:CLA_0536"/>
<dbReference type="PATRIC" id="fig|306263.5.peg.519"/>
<dbReference type="eggNOG" id="COG1160">
    <property type="taxonomic scope" value="Bacteria"/>
</dbReference>
<dbReference type="HOGENOM" id="CLU_016077_6_2_7"/>
<dbReference type="Proteomes" id="UP000007727">
    <property type="component" value="Chromosome"/>
</dbReference>
<dbReference type="GO" id="GO:0005525">
    <property type="term" value="F:GTP binding"/>
    <property type="evidence" value="ECO:0007669"/>
    <property type="project" value="UniProtKB-UniRule"/>
</dbReference>
<dbReference type="GO" id="GO:0043022">
    <property type="term" value="F:ribosome binding"/>
    <property type="evidence" value="ECO:0007669"/>
    <property type="project" value="TreeGrafter"/>
</dbReference>
<dbReference type="GO" id="GO:0042254">
    <property type="term" value="P:ribosome biogenesis"/>
    <property type="evidence" value="ECO:0007669"/>
    <property type="project" value="UniProtKB-KW"/>
</dbReference>
<dbReference type="CDD" id="cd01894">
    <property type="entry name" value="EngA1"/>
    <property type="match status" value="1"/>
</dbReference>
<dbReference type="CDD" id="cd01895">
    <property type="entry name" value="EngA2"/>
    <property type="match status" value="1"/>
</dbReference>
<dbReference type="FunFam" id="3.30.300.20:FF:000004">
    <property type="entry name" value="GTPase Der"/>
    <property type="match status" value="1"/>
</dbReference>
<dbReference type="Gene3D" id="3.30.300.20">
    <property type="match status" value="1"/>
</dbReference>
<dbReference type="Gene3D" id="3.40.50.300">
    <property type="entry name" value="P-loop containing nucleotide triphosphate hydrolases"/>
    <property type="match status" value="2"/>
</dbReference>
<dbReference type="HAMAP" id="MF_00195">
    <property type="entry name" value="GTPase_Der"/>
    <property type="match status" value="1"/>
</dbReference>
<dbReference type="InterPro" id="IPR031166">
    <property type="entry name" value="G_ENGA"/>
</dbReference>
<dbReference type="InterPro" id="IPR006073">
    <property type="entry name" value="GTP-bd"/>
</dbReference>
<dbReference type="InterPro" id="IPR016484">
    <property type="entry name" value="GTPase_Der"/>
</dbReference>
<dbReference type="InterPro" id="IPR032859">
    <property type="entry name" value="KH_dom-like"/>
</dbReference>
<dbReference type="InterPro" id="IPR015946">
    <property type="entry name" value="KH_dom-like_a/b"/>
</dbReference>
<dbReference type="InterPro" id="IPR027417">
    <property type="entry name" value="P-loop_NTPase"/>
</dbReference>
<dbReference type="InterPro" id="IPR005225">
    <property type="entry name" value="Small_GTP-bd"/>
</dbReference>
<dbReference type="NCBIfam" id="TIGR03594">
    <property type="entry name" value="GTPase_EngA"/>
    <property type="match status" value="1"/>
</dbReference>
<dbReference type="NCBIfam" id="TIGR00231">
    <property type="entry name" value="small_GTP"/>
    <property type="match status" value="2"/>
</dbReference>
<dbReference type="PANTHER" id="PTHR43834">
    <property type="entry name" value="GTPASE DER"/>
    <property type="match status" value="1"/>
</dbReference>
<dbReference type="PANTHER" id="PTHR43834:SF6">
    <property type="entry name" value="GTPASE DER"/>
    <property type="match status" value="1"/>
</dbReference>
<dbReference type="Pfam" id="PF14714">
    <property type="entry name" value="KH_dom-like"/>
    <property type="match status" value="1"/>
</dbReference>
<dbReference type="Pfam" id="PF01926">
    <property type="entry name" value="MMR_HSR1"/>
    <property type="match status" value="2"/>
</dbReference>
<dbReference type="PIRSF" id="PIRSF006485">
    <property type="entry name" value="GTP-binding_EngA"/>
    <property type="match status" value="1"/>
</dbReference>
<dbReference type="PRINTS" id="PR00326">
    <property type="entry name" value="GTP1OBG"/>
</dbReference>
<dbReference type="SUPFAM" id="SSF52540">
    <property type="entry name" value="P-loop containing nucleoside triphosphate hydrolases"/>
    <property type="match status" value="2"/>
</dbReference>
<dbReference type="PROSITE" id="PS51712">
    <property type="entry name" value="G_ENGA"/>
    <property type="match status" value="2"/>
</dbReference>
<name>DER_CAMLR</name>
<accession>B9KFN5</accession>
<evidence type="ECO:0000255" key="1">
    <source>
        <dbReference type="HAMAP-Rule" id="MF_00195"/>
    </source>
</evidence>
<reference key="1">
    <citation type="journal article" date="2008" name="Foodborne Pathog. Dis.">
        <title>The complete genome sequence and analysis of the human pathogen Campylobacter lari.</title>
        <authorList>
            <person name="Miller W.G."/>
            <person name="Wang G."/>
            <person name="Binnewies T.T."/>
            <person name="Parker C.T."/>
        </authorList>
    </citation>
    <scope>NUCLEOTIDE SEQUENCE [LARGE SCALE GENOMIC DNA]</scope>
    <source>
        <strain>RM2100 / D67 / ATCC BAA-1060</strain>
    </source>
</reference>
<organism>
    <name type="scientific">Campylobacter lari (strain RM2100 / D67 / ATCC BAA-1060)</name>
    <dbReference type="NCBI Taxonomy" id="306263"/>
    <lineage>
        <taxon>Bacteria</taxon>
        <taxon>Pseudomonadati</taxon>
        <taxon>Campylobacterota</taxon>
        <taxon>Epsilonproteobacteria</taxon>
        <taxon>Campylobacterales</taxon>
        <taxon>Campylobacteraceae</taxon>
        <taxon>Campylobacter</taxon>
    </lineage>
</organism>
<sequence length="461" mass="52121">MQSIILIGKPNVGKSSLFNRLARKRIAITSDISGTTRDTNKIEVQIDGKKALLIDSGGLDESNELFKNVKANSLKAAKNSDIIFYMVDGKFLPDDEDKAFFYEMKKLNKPIALVINKIDNKKDEERSWEFSNFGVKEVFNISVTHNIGIDELCMWASKFLNENFLDADDEEDFESYLENFDENSGDFKLKTINENHIKVGIIGRVNVGKSSLLNALVKEERSVVSDIAGTTIDPVNESIMHKDKIIEFVDTAGIRKRGKIQGLERYALNRTEYALTNAQIALLVLDAAEGFNELDERIAGLAAKHCLGVIIVLNKWDKSELDFDKTLKELKLDRFKFLAYAPVISVSALSGKRVHVLLDKILEVFANFTQKIPTAKLNALVEEATRAHPLPHDYGKLVKIYYAVQYDLAPPKIALIMNRPKALHFSYKRYLQNQIRKQFNFEGVPLIIVSRKKGSKDEQEG</sequence>
<comment type="function">
    <text evidence="1">GTPase that plays an essential role in the late steps of ribosome biogenesis.</text>
</comment>
<comment type="subunit">
    <text evidence="1">Associates with the 50S ribosomal subunit.</text>
</comment>
<comment type="similarity">
    <text evidence="1">Belongs to the TRAFAC class TrmE-Era-EngA-EngB-Septin-like GTPase superfamily. EngA (Der) GTPase family.</text>
</comment>
<feature type="chain" id="PRO_1000124347" description="GTPase Der">
    <location>
        <begin position="1"/>
        <end position="461"/>
    </location>
</feature>
<feature type="domain" description="EngA-type G 1">
    <location>
        <begin position="2"/>
        <end position="164"/>
    </location>
</feature>
<feature type="domain" description="EngA-type G 2">
    <location>
        <begin position="197"/>
        <end position="369"/>
    </location>
</feature>
<feature type="domain" description="KH-like" evidence="1">
    <location>
        <begin position="370"/>
        <end position="454"/>
    </location>
</feature>
<feature type="binding site" evidence="1">
    <location>
        <begin position="8"/>
        <end position="15"/>
    </location>
    <ligand>
        <name>GTP</name>
        <dbReference type="ChEBI" id="CHEBI:37565"/>
        <label>1</label>
    </ligand>
</feature>
<feature type="binding site" evidence="1">
    <location>
        <begin position="55"/>
        <end position="59"/>
    </location>
    <ligand>
        <name>GTP</name>
        <dbReference type="ChEBI" id="CHEBI:37565"/>
        <label>1</label>
    </ligand>
</feature>
<feature type="binding site" evidence="1">
    <location>
        <begin position="116"/>
        <end position="119"/>
    </location>
    <ligand>
        <name>GTP</name>
        <dbReference type="ChEBI" id="CHEBI:37565"/>
        <label>1</label>
    </ligand>
</feature>
<feature type="binding site" evidence="1">
    <location>
        <begin position="203"/>
        <end position="210"/>
    </location>
    <ligand>
        <name>GTP</name>
        <dbReference type="ChEBI" id="CHEBI:37565"/>
        <label>2</label>
    </ligand>
</feature>
<feature type="binding site" evidence="1">
    <location>
        <begin position="250"/>
        <end position="254"/>
    </location>
    <ligand>
        <name>GTP</name>
        <dbReference type="ChEBI" id="CHEBI:37565"/>
        <label>2</label>
    </ligand>
</feature>
<feature type="binding site" evidence="1">
    <location>
        <begin position="314"/>
        <end position="317"/>
    </location>
    <ligand>
        <name>GTP</name>
        <dbReference type="ChEBI" id="CHEBI:37565"/>
        <label>2</label>
    </ligand>
</feature>
<gene>
    <name evidence="1" type="primary">der</name>
    <name type="synonym">engA</name>
    <name type="ordered locus">Cla_0536</name>
</gene>